<keyword id="KW-0963">Cytoplasm</keyword>
<keyword id="KW-0346">Stress response</keyword>
<gene>
    <name evidence="1" type="primary">sbmC</name>
    <name type="ordered locus">EFER_2030</name>
</gene>
<sequence>MDYEIKQEKKRTIAGFHLVGPWEKTVKQGFDQLMMWVENHNIEPLEWVAVYYDNPDEVPAEKLRCDTVVTVPENFCLPENSEGVNVTEIAGGQYAVTVARVQGHDFGTPWYQFINSLLEDSQYQMAHKPCFEVYLNNGAVDGYWDIEMYVPVLPK</sequence>
<name>SBMC_ESCF3</name>
<comment type="function">
    <text evidence="1">Inhibits the supercoiling activity of DNA gyrase. Acts by inhibiting DNA gyrase at an early step, prior to (or at the step of) binding of DNA by the gyrase. It protects cells against toxins that target DNA gyrase, by inhibiting activity of these toxins and reducing the formation of lethal double-strand breaks in the cell.</text>
</comment>
<comment type="subunit">
    <text evidence="1">Interacts with DNA gyrase.</text>
</comment>
<comment type="subcellular location">
    <subcellularLocation>
        <location evidence="1">Cytoplasm</location>
    </subcellularLocation>
</comment>
<comment type="similarity">
    <text evidence="1">Belongs to the DNA gyrase inhibitor family.</text>
</comment>
<accession>B7LTX8</accession>
<feature type="chain" id="PRO_0000409701" description="DNA gyrase inhibitor">
    <location>
        <begin position="1"/>
        <end position="155"/>
    </location>
</feature>
<protein>
    <recommendedName>
        <fullName evidence="1">DNA gyrase inhibitor</fullName>
    </recommendedName>
</protein>
<proteinExistence type="inferred from homology"/>
<reference key="1">
    <citation type="journal article" date="2009" name="PLoS Genet.">
        <title>Organised genome dynamics in the Escherichia coli species results in highly diverse adaptive paths.</title>
        <authorList>
            <person name="Touchon M."/>
            <person name="Hoede C."/>
            <person name="Tenaillon O."/>
            <person name="Barbe V."/>
            <person name="Baeriswyl S."/>
            <person name="Bidet P."/>
            <person name="Bingen E."/>
            <person name="Bonacorsi S."/>
            <person name="Bouchier C."/>
            <person name="Bouvet O."/>
            <person name="Calteau A."/>
            <person name="Chiapello H."/>
            <person name="Clermont O."/>
            <person name="Cruveiller S."/>
            <person name="Danchin A."/>
            <person name="Diard M."/>
            <person name="Dossat C."/>
            <person name="Karoui M.E."/>
            <person name="Frapy E."/>
            <person name="Garry L."/>
            <person name="Ghigo J.M."/>
            <person name="Gilles A.M."/>
            <person name="Johnson J."/>
            <person name="Le Bouguenec C."/>
            <person name="Lescat M."/>
            <person name="Mangenot S."/>
            <person name="Martinez-Jehanne V."/>
            <person name="Matic I."/>
            <person name="Nassif X."/>
            <person name="Oztas S."/>
            <person name="Petit M.A."/>
            <person name="Pichon C."/>
            <person name="Rouy Z."/>
            <person name="Ruf C.S."/>
            <person name="Schneider D."/>
            <person name="Tourret J."/>
            <person name="Vacherie B."/>
            <person name="Vallenet D."/>
            <person name="Medigue C."/>
            <person name="Rocha E.P.C."/>
            <person name="Denamur E."/>
        </authorList>
    </citation>
    <scope>NUCLEOTIDE SEQUENCE [LARGE SCALE GENOMIC DNA]</scope>
    <source>
        <strain>ATCC 35469 / DSM 13698 / BCRC 15582 / CCUG 18766 / IAM 14443 / JCM 21226 / LMG 7866 / NBRC 102419 / NCTC 12128 / CDC 0568-73</strain>
    </source>
</reference>
<evidence type="ECO:0000255" key="1">
    <source>
        <dbReference type="HAMAP-Rule" id="MF_01896"/>
    </source>
</evidence>
<organism>
    <name type="scientific">Escherichia fergusonii (strain ATCC 35469 / DSM 13698 / CCUG 18766 / IAM 14443 / JCM 21226 / LMG 7866 / NBRC 102419 / NCTC 12128 / CDC 0568-73)</name>
    <dbReference type="NCBI Taxonomy" id="585054"/>
    <lineage>
        <taxon>Bacteria</taxon>
        <taxon>Pseudomonadati</taxon>
        <taxon>Pseudomonadota</taxon>
        <taxon>Gammaproteobacteria</taxon>
        <taxon>Enterobacterales</taxon>
        <taxon>Enterobacteriaceae</taxon>
        <taxon>Escherichia</taxon>
    </lineage>
</organism>
<dbReference type="EMBL" id="CU928158">
    <property type="protein sequence ID" value="CAQ89535.1"/>
    <property type="molecule type" value="Genomic_DNA"/>
</dbReference>
<dbReference type="RefSeq" id="WP_000384319.1">
    <property type="nucleotide sequence ID" value="NC_011740.1"/>
</dbReference>
<dbReference type="SMR" id="B7LTX8"/>
<dbReference type="GeneID" id="75056936"/>
<dbReference type="KEGG" id="efe:EFER_2030"/>
<dbReference type="HOGENOM" id="CLU_113664_3_2_6"/>
<dbReference type="OrthoDB" id="282744at2"/>
<dbReference type="Proteomes" id="UP000000745">
    <property type="component" value="Chromosome"/>
</dbReference>
<dbReference type="GO" id="GO:0005737">
    <property type="term" value="C:cytoplasm"/>
    <property type="evidence" value="ECO:0007669"/>
    <property type="project" value="UniProtKB-SubCell"/>
</dbReference>
<dbReference type="GO" id="GO:0008657">
    <property type="term" value="F:DNA topoisomerase type II (double strand cut, ATP-hydrolyzing) inhibitor activity"/>
    <property type="evidence" value="ECO:0007669"/>
    <property type="project" value="UniProtKB-UniRule"/>
</dbReference>
<dbReference type="Gene3D" id="3.20.80.10">
    <property type="entry name" value="Regulatory factor, effector binding domain"/>
    <property type="match status" value="1"/>
</dbReference>
<dbReference type="HAMAP" id="MF_01896">
    <property type="entry name" value="DNA_gyrase_inhibitor"/>
    <property type="match status" value="1"/>
</dbReference>
<dbReference type="InterPro" id="IPR010499">
    <property type="entry name" value="AraC_E-bd"/>
</dbReference>
<dbReference type="InterPro" id="IPR050908">
    <property type="entry name" value="DNA_gyrase_inhibitor"/>
</dbReference>
<dbReference type="InterPro" id="IPR024911">
    <property type="entry name" value="DNA_gyrase_inhibitor_GyrI"/>
</dbReference>
<dbReference type="InterPro" id="IPR029442">
    <property type="entry name" value="GyrI-like"/>
</dbReference>
<dbReference type="InterPro" id="IPR011256">
    <property type="entry name" value="Reg_factor_effector_dom_sf"/>
</dbReference>
<dbReference type="NCBIfam" id="NF007451">
    <property type="entry name" value="PRK10016.1"/>
    <property type="match status" value="1"/>
</dbReference>
<dbReference type="PANTHER" id="PTHR40055:SF2">
    <property type="entry name" value="DNA GYRASE INHIBITOR"/>
    <property type="match status" value="1"/>
</dbReference>
<dbReference type="PANTHER" id="PTHR40055">
    <property type="entry name" value="TRANSCRIPTIONAL REGULATOR YGIV-RELATED"/>
    <property type="match status" value="1"/>
</dbReference>
<dbReference type="Pfam" id="PF06445">
    <property type="entry name" value="GyrI-like"/>
    <property type="match status" value="1"/>
</dbReference>
<dbReference type="SMART" id="SM00871">
    <property type="entry name" value="AraC_E_bind"/>
    <property type="match status" value="1"/>
</dbReference>
<dbReference type="SUPFAM" id="SSF55136">
    <property type="entry name" value="Probable bacterial effector-binding domain"/>
    <property type="match status" value="1"/>
</dbReference>